<proteinExistence type="inferred from homology"/>
<accession>Q2FJC3</accession>
<dbReference type="EC" id="6.1.1.6" evidence="1"/>
<dbReference type="EMBL" id="CP000255">
    <property type="protein sequence ID" value="ABD21928.1"/>
    <property type="molecule type" value="Genomic_DNA"/>
</dbReference>
<dbReference type="RefSeq" id="WP_001288202.1">
    <property type="nucleotide sequence ID" value="NZ_CP027476.1"/>
</dbReference>
<dbReference type="SMR" id="Q2FJC3"/>
<dbReference type="GeneID" id="98344832"/>
<dbReference type="KEGG" id="saa:SAUSA300_0496"/>
<dbReference type="HOGENOM" id="CLU_008255_6_0_9"/>
<dbReference type="Proteomes" id="UP000001939">
    <property type="component" value="Chromosome"/>
</dbReference>
<dbReference type="GO" id="GO:0005829">
    <property type="term" value="C:cytosol"/>
    <property type="evidence" value="ECO:0007669"/>
    <property type="project" value="TreeGrafter"/>
</dbReference>
<dbReference type="GO" id="GO:0005524">
    <property type="term" value="F:ATP binding"/>
    <property type="evidence" value="ECO:0007669"/>
    <property type="project" value="UniProtKB-UniRule"/>
</dbReference>
<dbReference type="GO" id="GO:0140096">
    <property type="term" value="F:catalytic activity, acting on a protein"/>
    <property type="evidence" value="ECO:0007669"/>
    <property type="project" value="UniProtKB-ARBA"/>
</dbReference>
<dbReference type="GO" id="GO:0004824">
    <property type="term" value="F:lysine-tRNA ligase activity"/>
    <property type="evidence" value="ECO:0007669"/>
    <property type="project" value="UniProtKB-UniRule"/>
</dbReference>
<dbReference type="GO" id="GO:0000287">
    <property type="term" value="F:magnesium ion binding"/>
    <property type="evidence" value="ECO:0007669"/>
    <property type="project" value="UniProtKB-UniRule"/>
</dbReference>
<dbReference type="GO" id="GO:0016740">
    <property type="term" value="F:transferase activity"/>
    <property type="evidence" value="ECO:0007669"/>
    <property type="project" value="UniProtKB-ARBA"/>
</dbReference>
<dbReference type="GO" id="GO:0000049">
    <property type="term" value="F:tRNA binding"/>
    <property type="evidence" value="ECO:0007669"/>
    <property type="project" value="TreeGrafter"/>
</dbReference>
<dbReference type="GO" id="GO:0006430">
    <property type="term" value="P:lysyl-tRNA aminoacylation"/>
    <property type="evidence" value="ECO:0007669"/>
    <property type="project" value="UniProtKB-UniRule"/>
</dbReference>
<dbReference type="CDD" id="cd00775">
    <property type="entry name" value="LysRS_core"/>
    <property type="match status" value="1"/>
</dbReference>
<dbReference type="CDD" id="cd04322">
    <property type="entry name" value="LysRS_N"/>
    <property type="match status" value="1"/>
</dbReference>
<dbReference type="FunFam" id="2.40.50.140:FF:000024">
    <property type="entry name" value="Lysine--tRNA ligase"/>
    <property type="match status" value="1"/>
</dbReference>
<dbReference type="FunFam" id="3.30.930.10:FF:000001">
    <property type="entry name" value="Lysine--tRNA ligase"/>
    <property type="match status" value="1"/>
</dbReference>
<dbReference type="Gene3D" id="3.30.930.10">
    <property type="entry name" value="Bira Bifunctional Protein, Domain 2"/>
    <property type="match status" value="1"/>
</dbReference>
<dbReference type="Gene3D" id="2.40.50.140">
    <property type="entry name" value="Nucleic acid-binding proteins"/>
    <property type="match status" value="1"/>
</dbReference>
<dbReference type="HAMAP" id="MF_00252">
    <property type="entry name" value="Lys_tRNA_synth_class2"/>
    <property type="match status" value="1"/>
</dbReference>
<dbReference type="InterPro" id="IPR004364">
    <property type="entry name" value="Aa-tRNA-synt_II"/>
</dbReference>
<dbReference type="InterPro" id="IPR006195">
    <property type="entry name" value="aa-tRNA-synth_II"/>
</dbReference>
<dbReference type="InterPro" id="IPR045864">
    <property type="entry name" value="aa-tRNA-synth_II/BPL/LPL"/>
</dbReference>
<dbReference type="InterPro" id="IPR002313">
    <property type="entry name" value="Lys-tRNA-ligase_II"/>
</dbReference>
<dbReference type="InterPro" id="IPR034762">
    <property type="entry name" value="Lys-tRNA-ligase_II_bac/euk"/>
</dbReference>
<dbReference type="InterPro" id="IPR044136">
    <property type="entry name" value="Lys-tRNA-ligase_II_N"/>
</dbReference>
<dbReference type="InterPro" id="IPR018149">
    <property type="entry name" value="Lys-tRNA-synth_II_C"/>
</dbReference>
<dbReference type="InterPro" id="IPR012340">
    <property type="entry name" value="NA-bd_OB-fold"/>
</dbReference>
<dbReference type="InterPro" id="IPR004365">
    <property type="entry name" value="NA-bd_OB_tRNA"/>
</dbReference>
<dbReference type="NCBIfam" id="TIGR00499">
    <property type="entry name" value="lysS_bact"/>
    <property type="match status" value="1"/>
</dbReference>
<dbReference type="NCBIfam" id="NF001756">
    <property type="entry name" value="PRK00484.1"/>
    <property type="match status" value="1"/>
</dbReference>
<dbReference type="PANTHER" id="PTHR42918:SF15">
    <property type="entry name" value="LYSINE--TRNA LIGASE, CHLOROPLASTIC_MITOCHONDRIAL"/>
    <property type="match status" value="1"/>
</dbReference>
<dbReference type="PANTHER" id="PTHR42918">
    <property type="entry name" value="LYSYL-TRNA SYNTHETASE"/>
    <property type="match status" value="1"/>
</dbReference>
<dbReference type="Pfam" id="PF00152">
    <property type="entry name" value="tRNA-synt_2"/>
    <property type="match status" value="1"/>
</dbReference>
<dbReference type="Pfam" id="PF01336">
    <property type="entry name" value="tRNA_anti-codon"/>
    <property type="match status" value="1"/>
</dbReference>
<dbReference type="PIRSF" id="PIRSF039101">
    <property type="entry name" value="LysRS2"/>
    <property type="match status" value="1"/>
</dbReference>
<dbReference type="PRINTS" id="PR00982">
    <property type="entry name" value="TRNASYNTHLYS"/>
</dbReference>
<dbReference type="SUPFAM" id="SSF55681">
    <property type="entry name" value="Class II aaRS and biotin synthetases"/>
    <property type="match status" value="1"/>
</dbReference>
<dbReference type="SUPFAM" id="SSF50249">
    <property type="entry name" value="Nucleic acid-binding proteins"/>
    <property type="match status" value="1"/>
</dbReference>
<dbReference type="PROSITE" id="PS50862">
    <property type="entry name" value="AA_TRNA_LIGASE_II"/>
    <property type="match status" value="1"/>
</dbReference>
<feature type="chain" id="PRO_1000012940" description="Lysine--tRNA ligase">
    <location>
        <begin position="1"/>
        <end position="495"/>
    </location>
</feature>
<feature type="binding site" evidence="1">
    <location>
        <position position="406"/>
    </location>
    <ligand>
        <name>Mg(2+)</name>
        <dbReference type="ChEBI" id="CHEBI:18420"/>
        <label>1</label>
    </ligand>
</feature>
<feature type="binding site" evidence="1">
    <location>
        <position position="413"/>
    </location>
    <ligand>
        <name>Mg(2+)</name>
        <dbReference type="ChEBI" id="CHEBI:18420"/>
        <label>1</label>
    </ligand>
</feature>
<feature type="binding site" evidence="1">
    <location>
        <position position="413"/>
    </location>
    <ligand>
        <name>Mg(2+)</name>
        <dbReference type="ChEBI" id="CHEBI:18420"/>
        <label>2</label>
    </ligand>
</feature>
<gene>
    <name evidence="1" type="primary">lysS</name>
    <name type="ordered locus">SAUSA300_0496</name>
</gene>
<organism>
    <name type="scientific">Staphylococcus aureus (strain USA300)</name>
    <dbReference type="NCBI Taxonomy" id="367830"/>
    <lineage>
        <taxon>Bacteria</taxon>
        <taxon>Bacillati</taxon>
        <taxon>Bacillota</taxon>
        <taxon>Bacilli</taxon>
        <taxon>Bacillales</taxon>
        <taxon>Staphylococcaceae</taxon>
        <taxon>Staphylococcus</taxon>
    </lineage>
</organism>
<reference key="1">
    <citation type="journal article" date="2006" name="Lancet">
        <title>Complete genome sequence of USA300, an epidemic clone of community-acquired meticillin-resistant Staphylococcus aureus.</title>
        <authorList>
            <person name="Diep B.A."/>
            <person name="Gill S.R."/>
            <person name="Chang R.F."/>
            <person name="Phan T.H."/>
            <person name="Chen J.H."/>
            <person name="Davidson M.G."/>
            <person name="Lin F."/>
            <person name="Lin J."/>
            <person name="Carleton H.A."/>
            <person name="Mongodin E.F."/>
            <person name="Sensabaugh G.F."/>
            <person name="Perdreau-Remington F."/>
        </authorList>
    </citation>
    <scope>NUCLEOTIDE SEQUENCE [LARGE SCALE GENOMIC DNA]</scope>
    <source>
        <strain>USA300</strain>
    </source>
</reference>
<keyword id="KW-0030">Aminoacyl-tRNA synthetase</keyword>
<keyword id="KW-0067">ATP-binding</keyword>
<keyword id="KW-0963">Cytoplasm</keyword>
<keyword id="KW-0436">Ligase</keyword>
<keyword id="KW-0460">Magnesium</keyword>
<keyword id="KW-0479">Metal-binding</keyword>
<keyword id="KW-0547">Nucleotide-binding</keyword>
<keyword id="KW-0648">Protein biosynthesis</keyword>
<comment type="catalytic activity">
    <reaction evidence="1">
        <text>tRNA(Lys) + L-lysine + ATP = L-lysyl-tRNA(Lys) + AMP + diphosphate</text>
        <dbReference type="Rhea" id="RHEA:20792"/>
        <dbReference type="Rhea" id="RHEA-COMP:9696"/>
        <dbReference type="Rhea" id="RHEA-COMP:9697"/>
        <dbReference type="ChEBI" id="CHEBI:30616"/>
        <dbReference type="ChEBI" id="CHEBI:32551"/>
        <dbReference type="ChEBI" id="CHEBI:33019"/>
        <dbReference type="ChEBI" id="CHEBI:78442"/>
        <dbReference type="ChEBI" id="CHEBI:78529"/>
        <dbReference type="ChEBI" id="CHEBI:456215"/>
        <dbReference type="EC" id="6.1.1.6"/>
    </reaction>
</comment>
<comment type="cofactor">
    <cofactor evidence="1">
        <name>Mg(2+)</name>
        <dbReference type="ChEBI" id="CHEBI:18420"/>
    </cofactor>
    <text evidence="1">Binds 3 Mg(2+) ions per subunit.</text>
</comment>
<comment type="subunit">
    <text evidence="1">Homodimer.</text>
</comment>
<comment type="subcellular location">
    <subcellularLocation>
        <location evidence="1">Cytoplasm</location>
    </subcellularLocation>
</comment>
<comment type="similarity">
    <text evidence="1">Belongs to the class-II aminoacyl-tRNA synthetase family.</text>
</comment>
<sequence>MSEEMNDQMLVRRQKLQELYDLGIDPFGSKFDRSGLSSDLKEEWDQYSKEELVEKEADSHVAIAGRLMTKRGKGKAGFAHVQDLAGQIQIYVRKDQVGDDEFDLWKNADLGDIVGVEGVMFKTNTGELSVKAKKFTLLTKSLRPLPDKFHGLQDIEQRYRQRYLDLITNEDSTRTFINRSKIIQEMRNYLNNKGFLEVETPMMHQIAGGAAARPFVTHHNALDATLYMRIAIELHLKRLIVGGLEKVYEIGRVFRNEGVSTRHNPEFTMIELYEAYADYHDIMDLTESMVRHIANEVLGSAKVQYNGETIDLESAWTRLHIVDAVKEATGVDFYEVKSDEEAKALAKEHGIEIKDTMKYGHILNEFFEQKVEETLIQPTFIYGHPTEISPLAKKNPEDPRFTDRFELFIVGREHANAFTELNDPIDQKGRFEAQLVEKAQGNDEAHEMDEDYIEALEYGMPPTGGLGIGIDRLVMLLTDSPSIRDVLLFPYMRQK</sequence>
<evidence type="ECO:0000255" key="1">
    <source>
        <dbReference type="HAMAP-Rule" id="MF_00252"/>
    </source>
</evidence>
<protein>
    <recommendedName>
        <fullName evidence="1">Lysine--tRNA ligase</fullName>
        <ecNumber evidence="1">6.1.1.6</ecNumber>
    </recommendedName>
    <alternativeName>
        <fullName evidence="1">Lysyl-tRNA synthetase</fullName>
        <shortName evidence="1">LysRS</shortName>
    </alternativeName>
</protein>
<name>SYK_STAA3</name>